<organism>
    <name type="scientific">Helicobacter pylori (strain ATCC 700392 / 26695)</name>
    <name type="common">Campylobacter pylori</name>
    <dbReference type="NCBI Taxonomy" id="85962"/>
    <lineage>
        <taxon>Bacteria</taxon>
        <taxon>Pseudomonadati</taxon>
        <taxon>Campylobacterota</taxon>
        <taxon>Epsilonproteobacteria</taxon>
        <taxon>Campylobacterales</taxon>
        <taxon>Helicobacteraceae</taxon>
        <taxon>Helicobacter</taxon>
    </lineage>
</organism>
<protein>
    <recommendedName>
        <fullName>Septum site-determining protein MinD</fullName>
    </recommendedName>
    <alternativeName>
        <fullName>Cell division inhibitor MinD</fullName>
    </alternativeName>
</protein>
<evidence type="ECO:0000250" key="1"/>
<evidence type="ECO:0000250" key="2">
    <source>
        <dbReference type="UniProtKB" id="Q72H90"/>
    </source>
</evidence>
<evidence type="ECO:0000305" key="3"/>
<feature type="chain" id="PRO_0000201971" description="Septum site-determining protein MinD">
    <location>
        <begin position="1"/>
        <end position="268"/>
    </location>
</feature>
<feature type="binding site" evidence="2">
    <location>
        <begin position="11"/>
        <end position="18"/>
    </location>
    <ligand>
        <name>ATP</name>
        <dbReference type="ChEBI" id="CHEBI:30616"/>
    </ligand>
</feature>
<gene>
    <name type="primary">minD</name>
    <name type="ordered locus">HP_0331</name>
</gene>
<accession>O25098</accession>
<reference key="1">
    <citation type="journal article" date="1997" name="Nature">
        <title>The complete genome sequence of the gastric pathogen Helicobacter pylori.</title>
        <authorList>
            <person name="Tomb J.-F."/>
            <person name="White O."/>
            <person name="Kerlavage A.R."/>
            <person name="Clayton R.A."/>
            <person name="Sutton G.G."/>
            <person name="Fleischmann R.D."/>
            <person name="Ketchum K.A."/>
            <person name="Klenk H.-P."/>
            <person name="Gill S.R."/>
            <person name="Dougherty B.A."/>
            <person name="Nelson K.E."/>
            <person name="Quackenbush J."/>
            <person name="Zhou L."/>
            <person name="Kirkness E.F."/>
            <person name="Peterson S.N."/>
            <person name="Loftus B.J."/>
            <person name="Richardson D.L."/>
            <person name="Dodson R.J."/>
            <person name="Khalak H.G."/>
            <person name="Glodek A."/>
            <person name="McKenney K."/>
            <person name="FitzGerald L.M."/>
            <person name="Lee N."/>
            <person name="Adams M.D."/>
            <person name="Hickey E.K."/>
            <person name="Berg D.E."/>
            <person name="Gocayne J.D."/>
            <person name="Utterback T.R."/>
            <person name="Peterson J.D."/>
            <person name="Kelley J.M."/>
            <person name="Cotton M.D."/>
            <person name="Weidman J.F."/>
            <person name="Fujii C."/>
            <person name="Bowman C."/>
            <person name="Watthey L."/>
            <person name="Wallin E."/>
            <person name="Hayes W.S."/>
            <person name="Borodovsky M."/>
            <person name="Karp P.D."/>
            <person name="Smith H.O."/>
            <person name="Fraser C.M."/>
            <person name="Venter J.C."/>
        </authorList>
    </citation>
    <scope>NUCLEOTIDE SEQUENCE [LARGE SCALE GENOMIC DNA]</scope>
    <source>
        <strain>ATCC 700392 / 26695</strain>
    </source>
</reference>
<proteinExistence type="inferred from homology"/>
<name>MIND_HELPY</name>
<comment type="function">
    <text evidence="1">ATPase required for the correct placement of the division site. Cell division inhibitors MinC and MinD act in concert to form an inhibitor capable of blocking formation of the polar Z ring septums. Rapidly oscillates between the poles of the cell to destabilize FtsZ filaments that have formed before they mature into polar Z rings (By similarity).</text>
</comment>
<comment type="subunit">
    <text evidence="1">Interacts with MinC and FtsZ.</text>
</comment>
<comment type="subcellular location">
    <subcellularLocation>
        <location evidence="1">Cell membrane</location>
        <topology evidence="1">Peripheral membrane protein</topology>
    </subcellularLocation>
</comment>
<comment type="similarity">
    <text evidence="3">Belongs to the ParA family. MinD subfamily.</text>
</comment>
<sequence>MAIVVTITSGKGGVGKSTTTANLAIGLAESGKKVVAVDFDIGLRNLDMILGLENRIVYDVVDVMEKNCNLSQALITDKKTKNLSFLAASQSKDKNILDKEKVAILINALRADFDYILIDSPAGIESGFEHAILHADMALVVVTPEVSSLRDSDRVVGIIDAKSNRAKKGMEVHKHLIINRLKPELVANGEMISIEEVLKILCLPLIGIIPEDHHIISATNKGEPVIRTDCESAKAYQRITRRILGEEVEYVEFKAKRGFFSALKGIFS</sequence>
<keyword id="KW-0067">ATP-binding</keyword>
<keyword id="KW-0131">Cell cycle</keyword>
<keyword id="KW-0132">Cell division</keyword>
<keyword id="KW-1003">Cell membrane</keyword>
<keyword id="KW-0472">Membrane</keyword>
<keyword id="KW-0547">Nucleotide-binding</keyword>
<keyword id="KW-1185">Reference proteome</keyword>
<keyword id="KW-0717">Septation</keyword>
<dbReference type="EMBL" id="AE000511">
    <property type="protein sequence ID" value="AAD07400.1"/>
    <property type="molecule type" value="Genomic_DNA"/>
</dbReference>
<dbReference type="PIR" id="C64561">
    <property type="entry name" value="C64561"/>
</dbReference>
<dbReference type="RefSeq" id="NP_207129.1">
    <property type="nucleotide sequence ID" value="NC_000915.1"/>
</dbReference>
<dbReference type="RefSeq" id="WP_001019069.1">
    <property type="nucleotide sequence ID" value="NC_018939.1"/>
</dbReference>
<dbReference type="SMR" id="O25098"/>
<dbReference type="DIP" id="DIP-3247N"/>
<dbReference type="FunCoup" id="O25098">
    <property type="interactions" value="371"/>
</dbReference>
<dbReference type="IntAct" id="O25098">
    <property type="interactions" value="4"/>
</dbReference>
<dbReference type="MINT" id="O25098"/>
<dbReference type="STRING" id="85962.HP_0331"/>
<dbReference type="PaxDb" id="85962-C694_01675"/>
<dbReference type="EnsemblBacteria" id="AAD07400">
    <property type="protein sequence ID" value="AAD07400"/>
    <property type="gene ID" value="HP_0331"/>
</dbReference>
<dbReference type="KEGG" id="heo:C694_01675"/>
<dbReference type="KEGG" id="hpy:HP_0331"/>
<dbReference type="PATRIC" id="fig|85962.47.peg.353"/>
<dbReference type="eggNOG" id="COG2894">
    <property type="taxonomic scope" value="Bacteria"/>
</dbReference>
<dbReference type="InParanoid" id="O25098"/>
<dbReference type="OrthoDB" id="9773088at2"/>
<dbReference type="PhylomeDB" id="O25098"/>
<dbReference type="Proteomes" id="UP000000429">
    <property type="component" value="Chromosome"/>
</dbReference>
<dbReference type="GO" id="GO:0009898">
    <property type="term" value="C:cytoplasmic side of plasma membrane"/>
    <property type="evidence" value="ECO:0000318"/>
    <property type="project" value="GO_Central"/>
</dbReference>
<dbReference type="GO" id="GO:0005829">
    <property type="term" value="C:cytosol"/>
    <property type="evidence" value="ECO:0000318"/>
    <property type="project" value="GO_Central"/>
</dbReference>
<dbReference type="GO" id="GO:0005524">
    <property type="term" value="F:ATP binding"/>
    <property type="evidence" value="ECO:0000318"/>
    <property type="project" value="GO_Central"/>
</dbReference>
<dbReference type="GO" id="GO:0016887">
    <property type="term" value="F:ATP hydrolysis activity"/>
    <property type="evidence" value="ECO:0000318"/>
    <property type="project" value="GO_Central"/>
</dbReference>
<dbReference type="GO" id="GO:0000917">
    <property type="term" value="P:division septum assembly"/>
    <property type="evidence" value="ECO:0007669"/>
    <property type="project" value="UniProtKB-KW"/>
</dbReference>
<dbReference type="CDD" id="cd02036">
    <property type="entry name" value="MinD"/>
    <property type="match status" value="1"/>
</dbReference>
<dbReference type="FunFam" id="3.40.50.300:FF:000068">
    <property type="entry name" value="Site-determining protein"/>
    <property type="match status" value="1"/>
</dbReference>
<dbReference type="Gene3D" id="3.40.50.300">
    <property type="entry name" value="P-loop containing nucleotide triphosphate hydrolases"/>
    <property type="match status" value="1"/>
</dbReference>
<dbReference type="InterPro" id="IPR025669">
    <property type="entry name" value="AAA_dom"/>
</dbReference>
<dbReference type="InterPro" id="IPR010223">
    <property type="entry name" value="MinD"/>
</dbReference>
<dbReference type="InterPro" id="IPR025501">
    <property type="entry name" value="MinD_FleN"/>
</dbReference>
<dbReference type="InterPro" id="IPR027417">
    <property type="entry name" value="P-loop_NTPase"/>
</dbReference>
<dbReference type="InterPro" id="IPR050625">
    <property type="entry name" value="ParA/MinD_ATPase"/>
</dbReference>
<dbReference type="NCBIfam" id="TIGR01968">
    <property type="entry name" value="minD_bact"/>
    <property type="match status" value="1"/>
</dbReference>
<dbReference type="PANTHER" id="PTHR43384:SF6">
    <property type="entry name" value="SEPTUM SITE-DETERMINING PROTEIN MIND HOMOLOG, CHLOROPLASTIC"/>
    <property type="match status" value="1"/>
</dbReference>
<dbReference type="PANTHER" id="PTHR43384">
    <property type="entry name" value="SEPTUM SITE-DETERMINING PROTEIN MIND HOMOLOG, CHLOROPLASTIC-RELATED"/>
    <property type="match status" value="1"/>
</dbReference>
<dbReference type="Pfam" id="PF13614">
    <property type="entry name" value="AAA_31"/>
    <property type="match status" value="1"/>
</dbReference>
<dbReference type="PIRSF" id="PIRSF003092">
    <property type="entry name" value="MinD"/>
    <property type="match status" value="1"/>
</dbReference>
<dbReference type="SUPFAM" id="SSF52540">
    <property type="entry name" value="P-loop containing nucleoside triphosphate hydrolases"/>
    <property type="match status" value="1"/>
</dbReference>